<accession>O87792</accession>
<sequence>MNPVIKTFQFGQSTVTLETGRIARQATGAVLVTVDNDVTVLVTVVGAKQADPGKGFFPLSVHYQEKTYAAGKIPGGFFKREGRPSEKETLTSRLIDRPIRPLFPEGFMNEVQVVCTVVSTSKKTDPDIAAMIGTSAALAISGIPFEGPIGAARVAFHESTGYLLNPTYEQLAASSLDMVVAGTSDAVLMVESEAQELTEDQMLGAVLFAHDEFQAVIQAVKELAAEAGKPTWDWKPAVANTELFNAIRAEFGEAVSQGYTITVKADRYARLGELRDQAVAKFSGEEGQPSASEVKEIFGEIEYRTVRENIVNGKPRIDGRDNKTVRPLNIEVGVLPKTHGSALFTRGETQALVVATLGTARDAQLLDTLEGEKKDPFMLHYNFPPFSVGECGRMGGAGRREIGHGRLARRSVQAMLPAADVFPYTIRVVSEITESNGSSSMASVCGASLALMDAGVPMKAPVAGIAMGLVKEGDKFAVLTDILGDEDHLGDMDFKVAGTAKGVTALQMDIKINGITEEIMEIALGQALEARLNILGQMNQVIGQSRTELSANAPTMIAMKIDTDKIRDVIGKGGATIRAICEETKASIDIEDDGSIKIFGETKEAADAAKQRILGITAEAEIGKIYVGKVERIVDFGAFVNILPGKDGLVHISMLSDARVEKVTDILKEGQEVEVLVLDVDNRGRIKLSIKDVAAAKASGV</sequence>
<gene>
    <name evidence="1" type="primary">pnp</name>
</gene>
<name>PNP_PSEPU</name>
<reference key="1">
    <citation type="submission" date="1998-09" db="EMBL/GenBank/DDBJ databases">
        <title>Identification and cloning of genes involved in RNA turnover in Pseudomonas putida.</title>
        <authorList>
            <person name="Favaro R."/>
            <person name="Deho' G."/>
        </authorList>
    </citation>
    <scope>NUCLEOTIDE SEQUENCE [GENOMIC DNA]</scope>
    <source>
        <strain>TMB</strain>
    </source>
</reference>
<organism>
    <name type="scientific">Pseudomonas putida</name>
    <name type="common">Arthrobacter siderocapsulatus</name>
    <dbReference type="NCBI Taxonomy" id="303"/>
    <lineage>
        <taxon>Bacteria</taxon>
        <taxon>Pseudomonadati</taxon>
        <taxon>Pseudomonadota</taxon>
        <taxon>Gammaproteobacteria</taxon>
        <taxon>Pseudomonadales</taxon>
        <taxon>Pseudomonadaceae</taxon>
        <taxon>Pseudomonas</taxon>
    </lineage>
</organism>
<evidence type="ECO:0000255" key="1">
    <source>
        <dbReference type="HAMAP-Rule" id="MF_01595"/>
    </source>
</evidence>
<dbReference type="EC" id="2.7.7.8" evidence="1"/>
<dbReference type="EMBL" id="Y18132">
    <property type="protein sequence ID" value="CAA77048.1"/>
    <property type="molecule type" value="Genomic_DNA"/>
</dbReference>
<dbReference type="RefSeq" id="WP_020193780.1">
    <property type="nucleotide sequence ID" value="NZ_JBJJLZ010000027.1"/>
</dbReference>
<dbReference type="SMR" id="O87792"/>
<dbReference type="eggNOG" id="COG1185">
    <property type="taxonomic scope" value="Bacteria"/>
</dbReference>
<dbReference type="BRENDA" id="2.7.7.8">
    <property type="organism ID" value="5092"/>
</dbReference>
<dbReference type="GO" id="GO:0005829">
    <property type="term" value="C:cytosol"/>
    <property type="evidence" value="ECO:0007669"/>
    <property type="project" value="TreeGrafter"/>
</dbReference>
<dbReference type="GO" id="GO:0000175">
    <property type="term" value="F:3'-5'-RNA exonuclease activity"/>
    <property type="evidence" value="ECO:0007669"/>
    <property type="project" value="TreeGrafter"/>
</dbReference>
<dbReference type="GO" id="GO:0000287">
    <property type="term" value="F:magnesium ion binding"/>
    <property type="evidence" value="ECO:0007669"/>
    <property type="project" value="UniProtKB-UniRule"/>
</dbReference>
<dbReference type="GO" id="GO:0004654">
    <property type="term" value="F:polyribonucleotide nucleotidyltransferase activity"/>
    <property type="evidence" value="ECO:0007669"/>
    <property type="project" value="UniProtKB-UniRule"/>
</dbReference>
<dbReference type="GO" id="GO:0003723">
    <property type="term" value="F:RNA binding"/>
    <property type="evidence" value="ECO:0007669"/>
    <property type="project" value="UniProtKB-UniRule"/>
</dbReference>
<dbReference type="GO" id="GO:0006402">
    <property type="term" value="P:mRNA catabolic process"/>
    <property type="evidence" value="ECO:0007669"/>
    <property type="project" value="UniProtKB-UniRule"/>
</dbReference>
<dbReference type="GO" id="GO:0006396">
    <property type="term" value="P:RNA processing"/>
    <property type="evidence" value="ECO:0007669"/>
    <property type="project" value="InterPro"/>
</dbReference>
<dbReference type="CDD" id="cd02393">
    <property type="entry name" value="KH-I_PNPase"/>
    <property type="match status" value="1"/>
</dbReference>
<dbReference type="CDD" id="cd11363">
    <property type="entry name" value="RNase_PH_PNPase_1"/>
    <property type="match status" value="1"/>
</dbReference>
<dbReference type="CDD" id="cd11364">
    <property type="entry name" value="RNase_PH_PNPase_2"/>
    <property type="match status" value="1"/>
</dbReference>
<dbReference type="CDD" id="cd04472">
    <property type="entry name" value="S1_PNPase"/>
    <property type="match status" value="1"/>
</dbReference>
<dbReference type="FunFam" id="2.40.50.140:FF:000023">
    <property type="entry name" value="Polyribonucleotide nucleotidyltransferase"/>
    <property type="match status" value="1"/>
</dbReference>
<dbReference type="FunFam" id="3.30.1370.10:FF:000001">
    <property type="entry name" value="Polyribonucleotide nucleotidyltransferase"/>
    <property type="match status" value="1"/>
</dbReference>
<dbReference type="FunFam" id="3.30.230.70:FF:000001">
    <property type="entry name" value="Polyribonucleotide nucleotidyltransferase"/>
    <property type="match status" value="1"/>
</dbReference>
<dbReference type="FunFam" id="3.30.230.70:FF:000002">
    <property type="entry name" value="Polyribonucleotide nucleotidyltransferase"/>
    <property type="match status" value="1"/>
</dbReference>
<dbReference type="Gene3D" id="3.30.230.70">
    <property type="entry name" value="GHMP Kinase, N-terminal domain"/>
    <property type="match status" value="2"/>
</dbReference>
<dbReference type="Gene3D" id="3.30.1370.10">
    <property type="entry name" value="K Homology domain, type 1"/>
    <property type="match status" value="1"/>
</dbReference>
<dbReference type="Gene3D" id="2.40.50.140">
    <property type="entry name" value="Nucleic acid-binding proteins"/>
    <property type="match status" value="1"/>
</dbReference>
<dbReference type="HAMAP" id="MF_01595">
    <property type="entry name" value="PNPase"/>
    <property type="match status" value="1"/>
</dbReference>
<dbReference type="InterPro" id="IPR001247">
    <property type="entry name" value="ExoRNase_PH_dom1"/>
</dbReference>
<dbReference type="InterPro" id="IPR015847">
    <property type="entry name" value="ExoRNase_PH_dom2"/>
</dbReference>
<dbReference type="InterPro" id="IPR036345">
    <property type="entry name" value="ExoRNase_PH_dom2_sf"/>
</dbReference>
<dbReference type="InterPro" id="IPR004087">
    <property type="entry name" value="KH_dom"/>
</dbReference>
<dbReference type="InterPro" id="IPR004088">
    <property type="entry name" value="KH_dom_type_1"/>
</dbReference>
<dbReference type="InterPro" id="IPR036612">
    <property type="entry name" value="KH_dom_type_1_sf"/>
</dbReference>
<dbReference type="InterPro" id="IPR012340">
    <property type="entry name" value="NA-bd_OB-fold"/>
</dbReference>
<dbReference type="InterPro" id="IPR012162">
    <property type="entry name" value="PNPase"/>
</dbReference>
<dbReference type="InterPro" id="IPR027408">
    <property type="entry name" value="PNPase/RNase_PH_dom_sf"/>
</dbReference>
<dbReference type="InterPro" id="IPR015848">
    <property type="entry name" value="PNPase_PH_RNA-bd_bac/org-type"/>
</dbReference>
<dbReference type="InterPro" id="IPR020568">
    <property type="entry name" value="Ribosomal_Su5_D2-typ_SF"/>
</dbReference>
<dbReference type="InterPro" id="IPR003029">
    <property type="entry name" value="S1_domain"/>
</dbReference>
<dbReference type="NCBIfam" id="TIGR03591">
    <property type="entry name" value="polynuc_phos"/>
    <property type="match status" value="1"/>
</dbReference>
<dbReference type="NCBIfam" id="NF008805">
    <property type="entry name" value="PRK11824.1"/>
    <property type="match status" value="1"/>
</dbReference>
<dbReference type="PANTHER" id="PTHR11252">
    <property type="entry name" value="POLYRIBONUCLEOTIDE NUCLEOTIDYLTRANSFERASE"/>
    <property type="match status" value="1"/>
</dbReference>
<dbReference type="PANTHER" id="PTHR11252:SF0">
    <property type="entry name" value="POLYRIBONUCLEOTIDE NUCLEOTIDYLTRANSFERASE 1, MITOCHONDRIAL"/>
    <property type="match status" value="1"/>
</dbReference>
<dbReference type="Pfam" id="PF00013">
    <property type="entry name" value="KH_1"/>
    <property type="match status" value="1"/>
</dbReference>
<dbReference type="Pfam" id="PF03726">
    <property type="entry name" value="PNPase"/>
    <property type="match status" value="1"/>
</dbReference>
<dbReference type="Pfam" id="PF01138">
    <property type="entry name" value="RNase_PH"/>
    <property type="match status" value="2"/>
</dbReference>
<dbReference type="Pfam" id="PF03725">
    <property type="entry name" value="RNase_PH_C"/>
    <property type="match status" value="2"/>
</dbReference>
<dbReference type="Pfam" id="PF00575">
    <property type="entry name" value="S1"/>
    <property type="match status" value="1"/>
</dbReference>
<dbReference type="PIRSF" id="PIRSF005499">
    <property type="entry name" value="PNPase"/>
    <property type="match status" value="1"/>
</dbReference>
<dbReference type="SMART" id="SM00322">
    <property type="entry name" value="KH"/>
    <property type="match status" value="1"/>
</dbReference>
<dbReference type="SMART" id="SM00316">
    <property type="entry name" value="S1"/>
    <property type="match status" value="1"/>
</dbReference>
<dbReference type="SUPFAM" id="SSF54791">
    <property type="entry name" value="Eukaryotic type KH-domain (KH-domain type I)"/>
    <property type="match status" value="1"/>
</dbReference>
<dbReference type="SUPFAM" id="SSF50249">
    <property type="entry name" value="Nucleic acid-binding proteins"/>
    <property type="match status" value="1"/>
</dbReference>
<dbReference type="SUPFAM" id="SSF55666">
    <property type="entry name" value="Ribonuclease PH domain 2-like"/>
    <property type="match status" value="2"/>
</dbReference>
<dbReference type="SUPFAM" id="SSF54211">
    <property type="entry name" value="Ribosomal protein S5 domain 2-like"/>
    <property type="match status" value="2"/>
</dbReference>
<dbReference type="PROSITE" id="PS50084">
    <property type="entry name" value="KH_TYPE_1"/>
    <property type="match status" value="1"/>
</dbReference>
<dbReference type="PROSITE" id="PS50126">
    <property type="entry name" value="S1"/>
    <property type="match status" value="1"/>
</dbReference>
<proteinExistence type="inferred from homology"/>
<keyword id="KW-0963">Cytoplasm</keyword>
<keyword id="KW-0460">Magnesium</keyword>
<keyword id="KW-0479">Metal-binding</keyword>
<keyword id="KW-0548">Nucleotidyltransferase</keyword>
<keyword id="KW-0694">RNA-binding</keyword>
<keyword id="KW-0808">Transferase</keyword>
<comment type="function">
    <text evidence="1">Involved in mRNA degradation. Catalyzes the phosphorolysis of single-stranded polyribonucleotides processively in the 3'- to 5'-direction.</text>
</comment>
<comment type="catalytic activity">
    <reaction evidence="1">
        <text>RNA(n+1) + phosphate = RNA(n) + a ribonucleoside 5'-diphosphate</text>
        <dbReference type="Rhea" id="RHEA:22096"/>
        <dbReference type="Rhea" id="RHEA-COMP:14527"/>
        <dbReference type="Rhea" id="RHEA-COMP:17342"/>
        <dbReference type="ChEBI" id="CHEBI:43474"/>
        <dbReference type="ChEBI" id="CHEBI:57930"/>
        <dbReference type="ChEBI" id="CHEBI:140395"/>
        <dbReference type="EC" id="2.7.7.8"/>
    </reaction>
</comment>
<comment type="cofactor">
    <cofactor evidence="1">
        <name>Mg(2+)</name>
        <dbReference type="ChEBI" id="CHEBI:18420"/>
    </cofactor>
</comment>
<comment type="subunit">
    <text evidence="1">Component of the RNA degradosome, which is a multiprotein complex involved in RNA processing and mRNA degradation.</text>
</comment>
<comment type="subcellular location">
    <subcellularLocation>
        <location evidence="1">Cytoplasm</location>
    </subcellularLocation>
</comment>
<comment type="similarity">
    <text evidence="1">Belongs to the polyribonucleotide nucleotidyltransferase family.</text>
</comment>
<protein>
    <recommendedName>
        <fullName evidence="1">Polyribonucleotide nucleotidyltransferase</fullName>
        <ecNumber evidence="1">2.7.7.8</ecNumber>
    </recommendedName>
    <alternativeName>
        <fullName evidence="1">Polynucleotide phosphorylase</fullName>
        <shortName evidence="1">PNPase</shortName>
    </alternativeName>
</protein>
<feature type="chain" id="PRO_0000197916" description="Polyribonucleotide nucleotidyltransferase">
    <location>
        <begin position="1"/>
        <end position="701"/>
    </location>
</feature>
<feature type="domain" description="KH" evidence="1">
    <location>
        <begin position="554"/>
        <end position="613"/>
    </location>
</feature>
<feature type="domain" description="S1 motif" evidence="1">
    <location>
        <begin position="623"/>
        <end position="691"/>
    </location>
</feature>
<feature type="binding site" evidence="1">
    <location>
        <position position="487"/>
    </location>
    <ligand>
        <name>Mg(2+)</name>
        <dbReference type="ChEBI" id="CHEBI:18420"/>
    </ligand>
</feature>
<feature type="binding site" evidence="1">
    <location>
        <position position="493"/>
    </location>
    <ligand>
        <name>Mg(2+)</name>
        <dbReference type="ChEBI" id="CHEBI:18420"/>
    </ligand>
</feature>